<accession>B0B897</accession>
<keyword id="KW-0687">Ribonucleoprotein</keyword>
<keyword id="KW-0689">Ribosomal protein</keyword>
<keyword id="KW-0694">RNA-binding</keyword>
<keyword id="KW-0699">rRNA-binding</keyword>
<gene>
    <name evidence="1" type="primary">rplV</name>
    <name type="ordered locus">CTL0785</name>
</gene>
<organism>
    <name type="scientific">Chlamydia trachomatis serovar L2 (strain ATCC VR-902B / DSM 19102 / 434/Bu)</name>
    <dbReference type="NCBI Taxonomy" id="471472"/>
    <lineage>
        <taxon>Bacteria</taxon>
        <taxon>Pseudomonadati</taxon>
        <taxon>Chlamydiota</taxon>
        <taxon>Chlamydiia</taxon>
        <taxon>Chlamydiales</taxon>
        <taxon>Chlamydiaceae</taxon>
        <taxon>Chlamydia/Chlamydophila group</taxon>
        <taxon>Chlamydia</taxon>
    </lineage>
</organism>
<feature type="chain" id="PRO_0000354454" description="Large ribosomal subunit protein uL22">
    <location>
        <begin position="1"/>
        <end position="111"/>
    </location>
</feature>
<dbReference type="EMBL" id="AM884176">
    <property type="protein sequence ID" value="CAP04223.1"/>
    <property type="molecule type" value="Genomic_DNA"/>
</dbReference>
<dbReference type="RefSeq" id="WP_009873874.1">
    <property type="nucleotide sequence ID" value="NC_010287.1"/>
</dbReference>
<dbReference type="RefSeq" id="YP_001654856.1">
    <property type="nucleotide sequence ID" value="NC_010287.1"/>
</dbReference>
<dbReference type="SMR" id="B0B897"/>
<dbReference type="KEGG" id="ctb:CTL0785"/>
<dbReference type="PATRIC" id="fig|471472.4.peg.841"/>
<dbReference type="HOGENOM" id="CLU_083987_3_3_0"/>
<dbReference type="Proteomes" id="UP001154402">
    <property type="component" value="Chromosome"/>
</dbReference>
<dbReference type="GO" id="GO:0022625">
    <property type="term" value="C:cytosolic large ribosomal subunit"/>
    <property type="evidence" value="ECO:0007669"/>
    <property type="project" value="TreeGrafter"/>
</dbReference>
<dbReference type="GO" id="GO:0019843">
    <property type="term" value="F:rRNA binding"/>
    <property type="evidence" value="ECO:0007669"/>
    <property type="project" value="UniProtKB-UniRule"/>
</dbReference>
<dbReference type="GO" id="GO:0003735">
    <property type="term" value="F:structural constituent of ribosome"/>
    <property type="evidence" value="ECO:0007669"/>
    <property type="project" value="InterPro"/>
</dbReference>
<dbReference type="GO" id="GO:0006412">
    <property type="term" value="P:translation"/>
    <property type="evidence" value="ECO:0007669"/>
    <property type="project" value="UniProtKB-UniRule"/>
</dbReference>
<dbReference type="FunFam" id="3.90.470.10:FF:000025">
    <property type="entry name" value="50S ribosomal protein L22"/>
    <property type="match status" value="1"/>
</dbReference>
<dbReference type="Gene3D" id="3.90.470.10">
    <property type="entry name" value="Ribosomal protein L22/L17"/>
    <property type="match status" value="1"/>
</dbReference>
<dbReference type="HAMAP" id="MF_01331_B">
    <property type="entry name" value="Ribosomal_uL22_B"/>
    <property type="match status" value="1"/>
</dbReference>
<dbReference type="InterPro" id="IPR001063">
    <property type="entry name" value="Ribosomal_uL22"/>
</dbReference>
<dbReference type="InterPro" id="IPR005727">
    <property type="entry name" value="Ribosomal_uL22_bac/chlpt-type"/>
</dbReference>
<dbReference type="InterPro" id="IPR047867">
    <property type="entry name" value="Ribosomal_uL22_bac/org-type"/>
</dbReference>
<dbReference type="InterPro" id="IPR036394">
    <property type="entry name" value="Ribosomal_uL22_sf"/>
</dbReference>
<dbReference type="NCBIfam" id="TIGR01044">
    <property type="entry name" value="rplV_bact"/>
    <property type="match status" value="1"/>
</dbReference>
<dbReference type="PANTHER" id="PTHR13501">
    <property type="entry name" value="CHLOROPLAST 50S RIBOSOMAL PROTEIN L22-RELATED"/>
    <property type="match status" value="1"/>
</dbReference>
<dbReference type="PANTHER" id="PTHR13501:SF8">
    <property type="entry name" value="LARGE RIBOSOMAL SUBUNIT PROTEIN UL22M"/>
    <property type="match status" value="1"/>
</dbReference>
<dbReference type="Pfam" id="PF00237">
    <property type="entry name" value="Ribosomal_L22"/>
    <property type="match status" value="1"/>
</dbReference>
<dbReference type="SUPFAM" id="SSF54843">
    <property type="entry name" value="Ribosomal protein L22"/>
    <property type="match status" value="1"/>
</dbReference>
<evidence type="ECO:0000255" key="1">
    <source>
        <dbReference type="HAMAP-Rule" id="MF_01331"/>
    </source>
</evidence>
<evidence type="ECO:0000305" key="2"/>
<proteinExistence type="inferred from homology"/>
<comment type="function">
    <text evidence="1">This protein binds specifically to 23S rRNA; its binding is stimulated by other ribosomal proteins, e.g. L4, L17, and L20. It is important during the early stages of 50S assembly. It makes multiple contacts with different domains of the 23S rRNA in the assembled 50S subunit and ribosome (By similarity).</text>
</comment>
<comment type="function">
    <text evidence="1">The globular domain of the protein is located near the polypeptide exit tunnel on the outside of the subunit, while an extended beta-hairpin is found that lines the wall of the exit tunnel in the center of the 70S ribosome.</text>
</comment>
<comment type="subunit">
    <text evidence="1">Part of the 50S ribosomal subunit.</text>
</comment>
<comment type="similarity">
    <text evidence="1">Belongs to the universal ribosomal protein uL22 family.</text>
</comment>
<protein>
    <recommendedName>
        <fullName evidence="1">Large ribosomal subunit protein uL22</fullName>
    </recommendedName>
    <alternativeName>
        <fullName evidence="2">50S ribosomal protein L22</fullName>
    </alternativeName>
</protein>
<sequence length="111" mass="12455">MFKATARYIRVQPRKARLAAGLMRNRSVVEAQQQLSFSQMKAGRCLKKVLDSAIANAESNENIKRENLCVLEVRVDAGPMFKRMKSKSRGGRAPILKRTSHLTVIVGERGQ</sequence>
<reference key="1">
    <citation type="journal article" date="2008" name="Genome Res.">
        <title>Chlamydia trachomatis: genome sequence analysis of lymphogranuloma venereum isolates.</title>
        <authorList>
            <person name="Thomson N.R."/>
            <person name="Holden M.T.G."/>
            <person name="Carder C."/>
            <person name="Lennard N."/>
            <person name="Lockey S.J."/>
            <person name="Marsh P."/>
            <person name="Skipp P."/>
            <person name="O'Connor C.D."/>
            <person name="Goodhead I."/>
            <person name="Norbertzcak H."/>
            <person name="Harris B."/>
            <person name="Ormond D."/>
            <person name="Rance R."/>
            <person name="Quail M.A."/>
            <person name="Parkhill J."/>
            <person name="Stephens R.S."/>
            <person name="Clarke I.N."/>
        </authorList>
    </citation>
    <scope>NUCLEOTIDE SEQUENCE [LARGE SCALE GENOMIC DNA]</scope>
    <source>
        <strain>ATCC VR-902B / DSM 19102 / 434/Bu</strain>
    </source>
</reference>
<name>RL22_CHLT2</name>